<protein>
    <recommendedName>
        <fullName>Nodulation protein G</fullName>
    </recommendedName>
</protein>
<keyword id="KW-0520">NAD</keyword>
<keyword id="KW-0536">Nodulation</keyword>
<keyword id="KW-0560">Oxidoreductase</keyword>
<dbReference type="EMBL" id="X64772">
    <property type="protein sequence ID" value="CAA46021.1"/>
    <property type="molecule type" value="Genomic_DNA"/>
</dbReference>
<dbReference type="EMBL" id="X52913">
    <property type="protein sequence ID" value="CAA37101.1"/>
    <property type="status" value="ALT_FRAME"/>
    <property type="molecule type" value="Genomic_DNA"/>
</dbReference>
<dbReference type="PIR" id="S20485">
    <property type="entry name" value="DEKCNG"/>
</dbReference>
<dbReference type="RefSeq" id="WP_035669664.1">
    <property type="nucleotide sequence ID" value="NZ_WFKD01000096.1"/>
</dbReference>
<dbReference type="SMR" id="P17611"/>
<dbReference type="GO" id="GO:0005737">
    <property type="term" value="C:cytoplasm"/>
    <property type="evidence" value="ECO:0007669"/>
    <property type="project" value="InterPro"/>
</dbReference>
<dbReference type="GO" id="GO:0018454">
    <property type="term" value="F:acetoacetyl-CoA reductase activity"/>
    <property type="evidence" value="ECO:0007669"/>
    <property type="project" value="InterPro"/>
</dbReference>
<dbReference type="GO" id="GO:0006629">
    <property type="term" value="P:lipid metabolic process"/>
    <property type="evidence" value="ECO:0007669"/>
    <property type="project" value="UniProtKB-ARBA"/>
</dbReference>
<dbReference type="GO" id="GO:0032787">
    <property type="term" value="P:monocarboxylic acid metabolic process"/>
    <property type="evidence" value="ECO:0007669"/>
    <property type="project" value="UniProtKB-ARBA"/>
</dbReference>
<dbReference type="GO" id="GO:0042619">
    <property type="term" value="P:poly-hydroxybutyrate biosynthetic process"/>
    <property type="evidence" value="ECO:0007669"/>
    <property type="project" value="InterPro"/>
</dbReference>
<dbReference type="CDD" id="cd05333">
    <property type="entry name" value="BKR_SDR_c"/>
    <property type="match status" value="1"/>
</dbReference>
<dbReference type="FunFam" id="3.40.50.720:FF:000173">
    <property type="entry name" value="3-oxoacyl-[acyl-carrier protein] reductase"/>
    <property type="match status" value="1"/>
</dbReference>
<dbReference type="Gene3D" id="3.40.50.720">
    <property type="entry name" value="NAD(P)-binding Rossmann-like Domain"/>
    <property type="match status" value="1"/>
</dbReference>
<dbReference type="InterPro" id="IPR011283">
    <property type="entry name" value="Acetoacetyl-CoA_reductase"/>
</dbReference>
<dbReference type="InterPro" id="IPR036291">
    <property type="entry name" value="NAD(P)-bd_dom_sf"/>
</dbReference>
<dbReference type="InterPro" id="IPR020904">
    <property type="entry name" value="Sc_DH/Rdtase_CS"/>
</dbReference>
<dbReference type="InterPro" id="IPR050259">
    <property type="entry name" value="SDR"/>
</dbReference>
<dbReference type="InterPro" id="IPR002347">
    <property type="entry name" value="SDR_fam"/>
</dbReference>
<dbReference type="NCBIfam" id="TIGR01829">
    <property type="entry name" value="AcAcCoA_reduct"/>
    <property type="match status" value="1"/>
</dbReference>
<dbReference type="NCBIfam" id="NF009464">
    <property type="entry name" value="PRK12824.1"/>
    <property type="match status" value="1"/>
</dbReference>
<dbReference type="NCBIfam" id="NF009466">
    <property type="entry name" value="PRK12826.1-2"/>
    <property type="match status" value="1"/>
</dbReference>
<dbReference type="PANTHER" id="PTHR42879">
    <property type="entry name" value="3-OXOACYL-(ACYL-CARRIER-PROTEIN) REDUCTASE"/>
    <property type="match status" value="1"/>
</dbReference>
<dbReference type="PANTHER" id="PTHR42879:SF2">
    <property type="entry name" value="3-OXOACYL-[ACYL-CARRIER-PROTEIN] REDUCTASE FABG"/>
    <property type="match status" value="1"/>
</dbReference>
<dbReference type="Pfam" id="PF00106">
    <property type="entry name" value="adh_short"/>
    <property type="match status" value="1"/>
</dbReference>
<dbReference type="PRINTS" id="PR00081">
    <property type="entry name" value="GDHRDH"/>
</dbReference>
<dbReference type="PRINTS" id="PR00080">
    <property type="entry name" value="SDRFAMILY"/>
</dbReference>
<dbReference type="SMART" id="SM00822">
    <property type="entry name" value="PKS_KR"/>
    <property type="match status" value="1"/>
</dbReference>
<dbReference type="SUPFAM" id="SSF51735">
    <property type="entry name" value="NAD(P)-binding Rossmann-fold domains"/>
    <property type="match status" value="1"/>
</dbReference>
<dbReference type="PROSITE" id="PS00061">
    <property type="entry name" value="ADH_SHORT"/>
    <property type="match status" value="1"/>
</dbReference>
<feature type="chain" id="PRO_0000054732" description="Nodulation protein G">
    <location>
        <begin position="1"/>
        <end position="246"/>
    </location>
</feature>
<feature type="active site" description="Proton acceptor" evidence="2">
    <location>
        <position position="153"/>
    </location>
</feature>
<feature type="binding site" evidence="1">
    <location>
        <begin position="8"/>
        <end position="32"/>
    </location>
    <ligand>
        <name>NAD(+)</name>
        <dbReference type="ChEBI" id="CHEBI:57540"/>
    </ligand>
</feature>
<feature type="binding site" evidence="1">
    <location>
        <position position="140"/>
    </location>
    <ligand>
        <name>substrate</name>
    </ligand>
</feature>
<feature type="sequence conflict" description="In Ref. 2; CAA37101." evidence="3" ref="2">
    <original>DKAQWDAV</original>
    <variation>TRPSGMRF</variation>
    <location>
        <begin position="101"/>
        <end position="108"/>
    </location>
</feature>
<comment type="function">
    <text>Proposed to modify Nod factor fatty acyl chain.</text>
</comment>
<comment type="similarity">
    <text evidence="3">Belongs to the short-chain dehydrogenases/reductases (SDR) family.</text>
</comment>
<comment type="sequence caution" evidence="3">
    <conflict type="frameshift">
        <sequence resource="EMBL-CDS" id="CAA37101"/>
    </conflict>
</comment>
<name>NODG_AZOBR</name>
<proteinExistence type="inferred from homology"/>
<sequence length="246" mass="25718">MSQKIALVTGAMGGLGTAICQALAKDGCIVAANCLPNFEPAAAWLGQQEALGFKFYVAEGDVSDFESCKAMVAKIEADLGPVDILVNNAGITRDKFFAKMDKAQWDAVIATNLSSLFNVTQQVSPKMAERGWGRIINISSVNGVKGQAGQTNYSAAKAGVIGFTKALAAELATKGVTVNAIAPGYIGTDMVMAIREDIRQAITDSVPMKRLGRPDEIGGAVSYLASEIAGYVTGSTLNINGGLNYQ</sequence>
<evidence type="ECO:0000250" key="1"/>
<evidence type="ECO:0000255" key="2">
    <source>
        <dbReference type="PROSITE-ProRule" id="PRU10001"/>
    </source>
</evidence>
<evidence type="ECO:0000305" key="3"/>
<organism>
    <name type="scientific">Azospirillum brasilense</name>
    <dbReference type="NCBI Taxonomy" id="192"/>
    <lineage>
        <taxon>Bacteria</taxon>
        <taxon>Pseudomonadati</taxon>
        <taxon>Pseudomonadota</taxon>
        <taxon>Alphaproteobacteria</taxon>
        <taxon>Rhodospirillales</taxon>
        <taxon>Azospirillaceae</taxon>
        <taxon>Azospirillum</taxon>
    </lineage>
</organism>
<reference key="1">
    <citation type="journal article" date="1992" name="Mol. Gen. Genet.">
        <title>Characterization of an Azospirillum brasilense Sp7 gene homologous to Alcaligenes eutrophus phbB and to Rhizobium meliloti nodG.</title>
        <authorList>
            <person name="Vieille C."/>
            <person name="Elmerich C."/>
        </authorList>
    </citation>
    <scope>NUCLEOTIDE SEQUENCE [GENOMIC DNA]</scope>
    <source>
        <strain>ATCC 29145 / DSM 1690 / IMET 11303 / Sp7</strain>
    </source>
</reference>
<reference key="2">
    <citation type="journal article" date="1990" name="Nucleic Acids Res.">
        <title>Nucleotide sequence of the nodG gene of Azospirillum brasilense.</title>
        <authorList>
            <person name="Delledonne M."/>
            <person name="Porcari R."/>
            <person name="Fogher C."/>
        </authorList>
    </citation>
    <scope>NUCLEOTIDE SEQUENCE [GENOMIC DNA]</scope>
    <source>
        <strain>ATCC 29145 / DSM 1690 / IMET 11303 / Sp7</strain>
    </source>
</reference>
<accession>P17611</accession>
<gene>
    <name type="primary">nodG</name>
</gene>